<name>TUSA_HAEDU</name>
<organism>
    <name type="scientific">Haemophilus ducreyi (strain 35000HP / ATCC 700724)</name>
    <dbReference type="NCBI Taxonomy" id="233412"/>
    <lineage>
        <taxon>Bacteria</taxon>
        <taxon>Pseudomonadati</taxon>
        <taxon>Pseudomonadota</taxon>
        <taxon>Gammaproteobacteria</taxon>
        <taxon>Pasteurellales</taxon>
        <taxon>Pasteurellaceae</taxon>
        <taxon>Haemophilus</taxon>
    </lineage>
</organism>
<keyword id="KW-0963">Cytoplasm</keyword>
<keyword id="KW-1185">Reference proteome</keyword>
<protein>
    <recommendedName>
        <fullName evidence="1">Sulfur carrier protein TusA</fullName>
    </recommendedName>
</protein>
<proteinExistence type="inferred from homology"/>
<accession>Q7VNY2</accession>
<evidence type="ECO:0000255" key="1">
    <source>
        <dbReference type="HAMAP-Rule" id="MF_00413"/>
    </source>
</evidence>
<comment type="function">
    <text evidence="1">Sulfur carrier protein which probably makes part of a sulfur-relay system.</text>
</comment>
<comment type="subcellular location">
    <subcellularLocation>
        <location evidence="1">Cytoplasm</location>
    </subcellularLocation>
</comment>
<comment type="similarity">
    <text evidence="1">Belongs to the sulfur carrier protein TusA family.</text>
</comment>
<sequence>MTDLPVDKILDTLGLRCPEPVMLTRKTIRHMQQGEILFILADDPATTRDIPSFCEFMDHQLLKSKTDTPPYEYWIKKGI</sequence>
<dbReference type="EMBL" id="AE017143">
    <property type="protein sequence ID" value="AAP95315.1"/>
    <property type="molecule type" value="Genomic_DNA"/>
</dbReference>
<dbReference type="RefSeq" id="WP_010944368.1">
    <property type="nucleotide sequence ID" value="NC_002940.2"/>
</dbReference>
<dbReference type="SMR" id="Q7VNY2"/>
<dbReference type="STRING" id="233412.HD_0339"/>
<dbReference type="GeneID" id="60733638"/>
<dbReference type="KEGG" id="hdu:HD_0339"/>
<dbReference type="eggNOG" id="COG0425">
    <property type="taxonomic scope" value="Bacteria"/>
</dbReference>
<dbReference type="HOGENOM" id="CLU_165255_5_0_6"/>
<dbReference type="OrthoDB" id="9797352at2"/>
<dbReference type="Proteomes" id="UP000001022">
    <property type="component" value="Chromosome"/>
</dbReference>
<dbReference type="GO" id="GO:0005737">
    <property type="term" value="C:cytoplasm"/>
    <property type="evidence" value="ECO:0007669"/>
    <property type="project" value="UniProtKB-SubCell"/>
</dbReference>
<dbReference type="GO" id="GO:0097163">
    <property type="term" value="F:sulfur carrier activity"/>
    <property type="evidence" value="ECO:0007669"/>
    <property type="project" value="UniProtKB-UniRule"/>
</dbReference>
<dbReference type="GO" id="GO:0002143">
    <property type="term" value="P:tRNA wobble position uridine thiolation"/>
    <property type="evidence" value="ECO:0007669"/>
    <property type="project" value="InterPro"/>
</dbReference>
<dbReference type="Gene3D" id="3.30.110.40">
    <property type="entry name" value="TusA-like domain"/>
    <property type="match status" value="1"/>
</dbReference>
<dbReference type="HAMAP" id="MF_00413">
    <property type="entry name" value="Thiourid_synth_A"/>
    <property type="match status" value="1"/>
</dbReference>
<dbReference type="InterPro" id="IPR022931">
    <property type="entry name" value="Sulphur_carrier_TusA"/>
</dbReference>
<dbReference type="InterPro" id="IPR001455">
    <property type="entry name" value="TusA-like"/>
</dbReference>
<dbReference type="InterPro" id="IPR036868">
    <property type="entry name" value="TusA-like_sf"/>
</dbReference>
<dbReference type="NCBIfam" id="NF001423">
    <property type="entry name" value="PRK00299.1"/>
    <property type="match status" value="1"/>
</dbReference>
<dbReference type="PANTHER" id="PTHR33279:SF2">
    <property type="entry name" value="SULFUR CARRIER PROTEIN TUSA"/>
    <property type="match status" value="1"/>
</dbReference>
<dbReference type="PANTHER" id="PTHR33279">
    <property type="entry name" value="SULFUR CARRIER PROTEIN YEDF-RELATED"/>
    <property type="match status" value="1"/>
</dbReference>
<dbReference type="Pfam" id="PF01206">
    <property type="entry name" value="TusA"/>
    <property type="match status" value="1"/>
</dbReference>
<dbReference type="SUPFAM" id="SSF64307">
    <property type="entry name" value="SirA-like"/>
    <property type="match status" value="1"/>
</dbReference>
<dbReference type="PROSITE" id="PS01148">
    <property type="entry name" value="UPF0033"/>
    <property type="match status" value="1"/>
</dbReference>
<feature type="chain" id="PRO_0000159037" description="Sulfur carrier protein TusA">
    <location>
        <begin position="1"/>
        <end position="79"/>
    </location>
</feature>
<feature type="active site" description="Cysteine persulfide intermediate" evidence="1">
    <location>
        <position position="17"/>
    </location>
</feature>
<gene>
    <name evidence="1" type="primary">tusA</name>
    <name type="ordered locus">HD_0339</name>
</gene>
<reference key="1">
    <citation type="submission" date="2003-06" db="EMBL/GenBank/DDBJ databases">
        <title>The complete genome sequence of Haemophilus ducreyi.</title>
        <authorList>
            <person name="Munson R.S. Jr."/>
            <person name="Ray W.C."/>
            <person name="Mahairas G."/>
            <person name="Sabo P."/>
            <person name="Mungur R."/>
            <person name="Johnson L."/>
            <person name="Nguyen D."/>
            <person name="Wang J."/>
            <person name="Forst C."/>
            <person name="Hood L."/>
        </authorList>
    </citation>
    <scope>NUCLEOTIDE SEQUENCE [LARGE SCALE GENOMIC DNA]</scope>
    <source>
        <strain>35000HP / ATCC 700724</strain>
    </source>
</reference>